<proteinExistence type="evidence at transcript level"/>
<sequence>MPLSLRLAPSPTALSPTTGGFSPAKKQCRIPSYSGVATTTRRIGLCSLDYVKRGDSSVVRCSLQTVNVSVGQVTEVDKDTFWPIVKAAGEKIVVLDMYTQWCGPCKVIAPKYKALSEKYEDVVFLKLDCNPENRPLAKELGIRVVPTFKILKDNQVVKEVTGAKYDDLVAAIETARSASSSG</sequence>
<reference key="1">
    <citation type="submission" date="1997-08" db="EMBL/GenBank/DDBJ databases">
        <authorList>
            <person name="Mora-Garcia S.E.F."/>
            <person name="Rodriguez-Suarez R.J."/>
            <person name="Wolosiuk R.A."/>
        </authorList>
    </citation>
    <scope>NUCLEOTIDE SEQUENCE [MRNA]</scope>
    <source>
        <tissue>Leaf</tissue>
    </source>
</reference>
<organism>
    <name type="scientific">Brassica napus</name>
    <name type="common">Rape</name>
    <dbReference type="NCBI Taxonomy" id="3708"/>
    <lineage>
        <taxon>Eukaryota</taxon>
        <taxon>Viridiplantae</taxon>
        <taxon>Streptophyta</taxon>
        <taxon>Embryophyta</taxon>
        <taxon>Tracheophyta</taxon>
        <taxon>Spermatophyta</taxon>
        <taxon>Magnoliopsida</taxon>
        <taxon>eudicotyledons</taxon>
        <taxon>Gunneridae</taxon>
        <taxon>Pentapetalae</taxon>
        <taxon>rosids</taxon>
        <taxon>malvids</taxon>
        <taxon>Brassicales</taxon>
        <taxon>Brassicaceae</taxon>
        <taxon>Brassiceae</taxon>
        <taxon>Brassica</taxon>
    </lineage>
</organism>
<keyword id="KW-0150">Chloroplast</keyword>
<keyword id="KW-1015">Disulfide bond</keyword>
<keyword id="KW-0249">Electron transport</keyword>
<keyword id="KW-0934">Plastid</keyword>
<keyword id="KW-0676">Redox-active center</keyword>
<keyword id="KW-0809">Transit peptide</keyword>
<keyword id="KW-0813">Transport</keyword>
<evidence type="ECO:0000250" key="1"/>
<evidence type="ECO:0000255" key="2"/>
<evidence type="ECO:0000255" key="3">
    <source>
        <dbReference type="PROSITE-ProRule" id="PRU00691"/>
    </source>
</evidence>
<evidence type="ECO:0000256" key="4">
    <source>
        <dbReference type="SAM" id="MobiDB-lite"/>
    </source>
</evidence>
<evidence type="ECO:0000305" key="5"/>
<comment type="function">
    <text evidence="1">Participates in various redox reactions through the reversible oxidation of the active center dithiol to a disulfide. The F form is known to activate a number of enzymes of the photosynthetic carbon cycle (By similarity).</text>
</comment>
<comment type="subunit">
    <text evidence="1">Forms a complex with heterodimeric ferredoxin-thioredoxin reductase (FTR) and ferredoxin.</text>
</comment>
<comment type="subcellular location">
    <subcellularLocation>
        <location evidence="1">Plastid</location>
        <location evidence="1">Chloroplast</location>
    </subcellularLocation>
</comment>
<comment type="similarity">
    <text evidence="5">Belongs to the thioredoxin family. Plant F-type subfamily.</text>
</comment>
<protein>
    <recommendedName>
        <fullName>Thioredoxin F-type, chloroplastic</fullName>
        <shortName>Trx-F</shortName>
    </recommendedName>
</protein>
<dbReference type="EMBL" id="AF018174">
    <property type="protein sequence ID" value="AAC04671.1"/>
    <property type="molecule type" value="mRNA"/>
</dbReference>
<dbReference type="PIR" id="T07837">
    <property type="entry name" value="T07837"/>
</dbReference>
<dbReference type="SMR" id="O48897"/>
<dbReference type="GO" id="GO:0009507">
    <property type="term" value="C:chloroplast"/>
    <property type="evidence" value="ECO:0007669"/>
    <property type="project" value="UniProtKB-SubCell"/>
</dbReference>
<dbReference type="CDD" id="cd02947">
    <property type="entry name" value="TRX_family"/>
    <property type="match status" value="1"/>
</dbReference>
<dbReference type="FunFam" id="3.40.30.10:FF:000250">
    <property type="entry name" value="Thioredoxin F-type, chloroplastic"/>
    <property type="match status" value="1"/>
</dbReference>
<dbReference type="Gene3D" id="3.40.30.10">
    <property type="entry name" value="Glutaredoxin"/>
    <property type="match status" value="1"/>
</dbReference>
<dbReference type="InterPro" id="IPR036249">
    <property type="entry name" value="Thioredoxin-like_sf"/>
</dbReference>
<dbReference type="InterPro" id="IPR017937">
    <property type="entry name" value="Thioredoxin_CS"/>
</dbReference>
<dbReference type="InterPro" id="IPR013766">
    <property type="entry name" value="Thioredoxin_domain"/>
</dbReference>
<dbReference type="PANTHER" id="PTHR46115">
    <property type="entry name" value="THIOREDOXIN-LIKE PROTEIN 1"/>
    <property type="match status" value="1"/>
</dbReference>
<dbReference type="Pfam" id="PF00085">
    <property type="entry name" value="Thioredoxin"/>
    <property type="match status" value="1"/>
</dbReference>
<dbReference type="PRINTS" id="PR00421">
    <property type="entry name" value="THIOREDOXIN"/>
</dbReference>
<dbReference type="SUPFAM" id="SSF52833">
    <property type="entry name" value="Thioredoxin-like"/>
    <property type="match status" value="1"/>
</dbReference>
<dbReference type="PROSITE" id="PS00194">
    <property type="entry name" value="THIOREDOXIN_1"/>
    <property type="match status" value="1"/>
</dbReference>
<dbReference type="PROSITE" id="PS51352">
    <property type="entry name" value="THIOREDOXIN_2"/>
    <property type="match status" value="1"/>
</dbReference>
<name>TRXF_BRANA</name>
<gene>
    <name type="primary">TRXF</name>
</gene>
<feature type="transit peptide" description="Chloroplast" evidence="2">
    <location>
        <begin position="1"/>
        <end status="unknown"/>
    </location>
</feature>
<feature type="chain" id="PRO_0000034158" description="Thioredoxin F-type, chloroplastic">
    <location>
        <begin status="unknown"/>
        <end position="182"/>
    </location>
</feature>
<feature type="domain" description="Thioredoxin" evidence="3">
    <location>
        <begin position="52"/>
        <end position="177"/>
    </location>
</feature>
<feature type="region of interest" description="Disordered" evidence="4">
    <location>
        <begin position="1"/>
        <end position="22"/>
    </location>
</feature>
<feature type="active site" description="Nucleophile" evidence="1">
    <location>
        <position position="102"/>
    </location>
</feature>
<feature type="active site" description="Nucleophile" evidence="1">
    <location>
        <position position="105"/>
    </location>
</feature>
<feature type="site" description="Deprotonates C-terminal active site Cys" evidence="1">
    <location>
        <position position="96"/>
    </location>
</feature>
<feature type="site" description="Contributes to redox potential value" evidence="1">
    <location>
        <position position="103"/>
    </location>
</feature>
<feature type="site" description="Contributes to redox potential value" evidence="1">
    <location>
        <position position="104"/>
    </location>
</feature>
<feature type="disulfide bond" description="Redox-active" evidence="3">
    <location>
        <begin position="102"/>
        <end position="105"/>
    </location>
</feature>
<accession>O48897</accession>